<feature type="chain" id="PRO_0000228254" description="Translation initiation factor IF-2">
    <location>
        <begin position="1"/>
        <end position="955"/>
    </location>
</feature>
<feature type="domain" description="tr-type G">
    <location>
        <begin position="448"/>
        <end position="620"/>
    </location>
</feature>
<feature type="region of interest" description="Disordered" evidence="3">
    <location>
        <begin position="49"/>
        <end position="352"/>
    </location>
</feature>
<feature type="region of interest" description="G1" evidence="1">
    <location>
        <begin position="457"/>
        <end position="464"/>
    </location>
</feature>
<feature type="region of interest" description="G2" evidence="1">
    <location>
        <begin position="482"/>
        <end position="486"/>
    </location>
</feature>
<feature type="region of interest" description="G3" evidence="1">
    <location>
        <begin position="507"/>
        <end position="510"/>
    </location>
</feature>
<feature type="region of interest" description="G4" evidence="1">
    <location>
        <begin position="561"/>
        <end position="564"/>
    </location>
</feature>
<feature type="region of interest" description="G5" evidence="1">
    <location>
        <begin position="597"/>
        <end position="599"/>
    </location>
</feature>
<feature type="compositionally biased region" description="Low complexity" evidence="3">
    <location>
        <begin position="77"/>
        <end position="88"/>
    </location>
</feature>
<feature type="compositionally biased region" description="Pro residues" evidence="3">
    <location>
        <begin position="95"/>
        <end position="121"/>
    </location>
</feature>
<feature type="compositionally biased region" description="Pro residues" evidence="3">
    <location>
        <begin position="149"/>
        <end position="159"/>
    </location>
</feature>
<feature type="compositionally biased region" description="Pro residues" evidence="3">
    <location>
        <begin position="188"/>
        <end position="202"/>
    </location>
</feature>
<feature type="compositionally biased region" description="Pro residues" evidence="3">
    <location>
        <begin position="209"/>
        <end position="223"/>
    </location>
</feature>
<feature type="compositionally biased region" description="Gly residues" evidence="3">
    <location>
        <begin position="225"/>
        <end position="235"/>
    </location>
</feature>
<feature type="compositionally biased region" description="Pro residues" evidence="3">
    <location>
        <begin position="238"/>
        <end position="264"/>
    </location>
</feature>
<feature type="compositionally biased region" description="Gly residues" evidence="3">
    <location>
        <begin position="273"/>
        <end position="322"/>
    </location>
</feature>
<feature type="compositionally biased region" description="Basic residues" evidence="3">
    <location>
        <begin position="326"/>
        <end position="335"/>
    </location>
</feature>
<feature type="binding site" evidence="2">
    <location>
        <begin position="457"/>
        <end position="464"/>
    </location>
    <ligand>
        <name>GTP</name>
        <dbReference type="ChEBI" id="CHEBI:37565"/>
    </ligand>
</feature>
<feature type="binding site" evidence="2">
    <location>
        <begin position="507"/>
        <end position="511"/>
    </location>
    <ligand>
        <name>GTP</name>
        <dbReference type="ChEBI" id="CHEBI:37565"/>
    </ligand>
</feature>
<feature type="binding site" evidence="2">
    <location>
        <begin position="561"/>
        <end position="564"/>
    </location>
    <ligand>
        <name>GTP</name>
        <dbReference type="ChEBI" id="CHEBI:37565"/>
    </ligand>
</feature>
<gene>
    <name evidence="2" type="primary">infB</name>
    <name type="ordered locus">Tfu_0778</name>
</gene>
<dbReference type="EMBL" id="CP000088">
    <property type="protein sequence ID" value="AAZ54816.1"/>
    <property type="molecule type" value="Genomic_DNA"/>
</dbReference>
<dbReference type="RefSeq" id="WP_011291225.1">
    <property type="nucleotide sequence ID" value="NC_007333.1"/>
</dbReference>
<dbReference type="SMR" id="Q47RV1"/>
<dbReference type="STRING" id="269800.Tfu_0778"/>
<dbReference type="KEGG" id="tfu:Tfu_0778"/>
<dbReference type="eggNOG" id="COG0532">
    <property type="taxonomic scope" value="Bacteria"/>
</dbReference>
<dbReference type="HOGENOM" id="CLU_006301_9_4_11"/>
<dbReference type="OrthoDB" id="9811804at2"/>
<dbReference type="GO" id="GO:0005829">
    <property type="term" value="C:cytosol"/>
    <property type="evidence" value="ECO:0007669"/>
    <property type="project" value="TreeGrafter"/>
</dbReference>
<dbReference type="GO" id="GO:0005525">
    <property type="term" value="F:GTP binding"/>
    <property type="evidence" value="ECO:0007669"/>
    <property type="project" value="UniProtKB-KW"/>
</dbReference>
<dbReference type="GO" id="GO:0003924">
    <property type="term" value="F:GTPase activity"/>
    <property type="evidence" value="ECO:0007669"/>
    <property type="project" value="UniProtKB-UniRule"/>
</dbReference>
<dbReference type="GO" id="GO:0003743">
    <property type="term" value="F:translation initiation factor activity"/>
    <property type="evidence" value="ECO:0007669"/>
    <property type="project" value="UniProtKB-UniRule"/>
</dbReference>
<dbReference type="CDD" id="cd01887">
    <property type="entry name" value="IF2_eIF5B"/>
    <property type="match status" value="1"/>
</dbReference>
<dbReference type="CDD" id="cd03702">
    <property type="entry name" value="IF2_mtIF2_II"/>
    <property type="match status" value="1"/>
</dbReference>
<dbReference type="CDD" id="cd03692">
    <property type="entry name" value="mtIF2_IVc"/>
    <property type="match status" value="1"/>
</dbReference>
<dbReference type="FunFam" id="1.10.10.2480:FF:000003">
    <property type="entry name" value="Translation initiation factor IF-2"/>
    <property type="match status" value="1"/>
</dbReference>
<dbReference type="FunFam" id="2.40.30.10:FF:000007">
    <property type="entry name" value="Translation initiation factor IF-2"/>
    <property type="match status" value="1"/>
</dbReference>
<dbReference type="FunFam" id="2.40.30.10:FF:000008">
    <property type="entry name" value="Translation initiation factor IF-2"/>
    <property type="match status" value="1"/>
</dbReference>
<dbReference type="FunFam" id="3.40.50.10050:FF:000001">
    <property type="entry name" value="Translation initiation factor IF-2"/>
    <property type="match status" value="1"/>
</dbReference>
<dbReference type="FunFam" id="3.40.50.300:FF:000019">
    <property type="entry name" value="Translation initiation factor IF-2"/>
    <property type="match status" value="1"/>
</dbReference>
<dbReference type="Gene3D" id="1.10.10.2480">
    <property type="match status" value="1"/>
</dbReference>
<dbReference type="Gene3D" id="3.40.50.300">
    <property type="entry name" value="P-loop containing nucleotide triphosphate hydrolases"/>
    <property type="match status" value="1"/>
</dbReference>
<dbReference type="Gene3D" id="2.40.30.10">
    <property type="entry name" value="Translation factors"/>
    <property type="match status" value="2"/>
</dbReference>
<dbReference type="Gene3D" id="3.40.50.10050">
    <property type="entry name" value="Translation initiation factor IF- 2, domain 3"/>
    <property type="match status" value="1"/>
</dbReference>
<dbReference type="HAMAP" id="MF_00100_B">
    <property type="entry name" value="IF_2_B"/>
    <property type="match status" value="1"/>
</dbReference>
<dbReference type="InterPro" id="IPR053905">
    <property type="entry name" value="EF-G-like_DII"/>
</dbReference>
<dbReference type="InterPro" id="IPR044145">
    <property type="entry name" value="IF2_II"/>
</dbReference>
<dbReference type="InterPro" id="IPR006847">
    <property type="entry name" value="IF2_N"/>
</dbReference>
<dbReference type="InterPro" id="IPR027417">
    <property type="entry name" value="P-loop_NTPase"/>
</dbReference>
<dbReference type="InterPro" id="IPR005225">
    <property type="entry name" value="Small_GTP-bd"/>
</dbReference>
<dbReference type="InterPro" id="IPR000795">
    <property type="entry name" value="T_Tr_GTP-bd_dom"/>
</dbReference>
<dbReference type="InterPro" id="IPR000178">
    <property type="entry name" value="TF_IF2_bacterial-like"/>
</dbReference>
<dbReference type="InterPro" id="IPR015760">
    <property type="entry name" value="TIF_IF2"/>
</dbReference>
<dbReference type="InterPro" id="IPR023115">
    <property type="entry name" value="TIF_IF2_dom3"/>
</dbReference>
<dbReference type="InterPro" id="IPR036925">
    <property type="entry name" value="TIF_IF2_dom3_sf"/>
</dbReference>
<dbReference type="InterPro" id="IPR009000">
    <property type="entry name" value="Transl_B-barrel_sf"/>
</dbReference>
<dbReference type="NCBIfam" id="TIGR00487">
    <property type="entry name" value="IF-2"/>
    <property type="match status" value="1"/>
</dbReference>
<dbReference type="NCBIfam" id="TIGR00231">
    <property type="entry name" value="small_GTP"/>
    <property type="match status" value="1"/>
</dbReference>
<dbReference type="PANTHER" id="PTHR43381:SF5">
    <property type="entry name" value="TR-TYPE G DOMAIN-CONTAINING PROTEIN"/>
    <property type="match status" value="1"/>
</dbReference>
<dbReference type="PANTHER" id="PTHR43381">
    <property type="entry name" value="TRANSLATION INITIATION FACTOR IF-2-RELATED"/>
    <property type="match status" value="1"/>
</dbReference>
<dbReference type="Pfam" id="PF22042">
    <property type="entry name" value="EF-G_D2"/>
    <property type="match status" value="1"/>
</dbReference>
<dbReference type="Pfam" id="PF00009">
    <property type="entry name" value="GTP_EFTU"/>
    <property type="match status" value="1"/>
</dbReference>
<dbReference type="Pfam" id="PF11987">
    <property type="entry name" value="IF-2"/>
    <property type="match status" value="1"/>
</dbReference>
<dbReference type="Pfam" id="PF04760">
    <property type="entry name" value="IF2_N"/>
    <property type="match status" value="1"/>
</dbReference>
<dbReference type="PRINTS" id="PR00315">
    <property type="entry name" value="ELONGATNFCT"/>
</dbReference>
<dbReference type="SMART" id="SM00173">
    <property type="entry name" value="RAS"/>
    <property type="match status" value="1"/>
</dbReference>
<dbReference type="SUPFAM" id="SSF52156">
    <property type="entry name" value="Initiation factor IF2/eIF5b, domain 3"/>
    <property type="match status" value="1"/>
</dbReference>
<dbReference type="SUPFAM" id="SSF52540">
    <property type="entry name" value="P-loop containing nucleoside triphosphate hydrolases"/>
    <property type="match status" value="1"/>
</dbReference>
<dbReference type="SUPFAM" id="SSF50447">
    <property type="entry name" value="Translation proteins"/>
    <property type="match status" value="2"/>
</dbReference>
<dbReference type="PROSITE" id="PS51722">
    <property type="entry name" value="G_TR_2"/>
    <property type="match status" value="1"/>
</dbReference>
<dbReference type="PROSITE" id="PS01176">
    <property type="entry name" value="IF2"/>
    <property type="match status" value="1"/>
</dbReference>
<sequence>MAKVRVYELAKEFGVESKAVLAKLQEMGEFVRSASSTVEAPVVRRLKEAFSQSSESTEGAKGGQEKKKPSPKPQPSPQQQTKASAPSAGGETPRPAVPKPGPGLKPGPRPVPKPGPRPGPRPEGGAGKAGQQPSGAQGPARPESGKTPRPVPKPGPRPGNNPFSSTASGMGTRPTPRPPASGGTGAPRPGPRPHPGMMPPRPGASAGGPPRPQAPRPQAPRPGPGTAGGRPGSSAGGPPRPVPRPGPRPSPMNMPASRPTPPGGARPSTSSRSGGGRGRGGGGGAGPRGGGAGGGAPRTGFGGRPGGGRGRGGTAGAFGRPGGRPSRSRKSKKQRRQELKDMQAPSFGGVKIPSGNGKVIRLSRGASLADFGERIDVNPASLVQVVMTQLGEMVTATQSLPDETLQLLGEELNYTVEVVSPEDEDRELLESFSIEFGEDIGSEEDLKPRAPVVTVMGHVDHGKTRLLDAIRNTNVASGEAGGITQHIGAYQVTTTVDGEERKITFIDTPGHEAFTAMRARGAQATDIAVLVVAADDGVKPQTAEAIDHAKAADVPIVVAVNKIDLPTADPQKVRAQLTEYGLVAEEYGGNVQFVDISAKENLNIDQLLEAIILTADAELDLKANPDMPAQGLAIEAYLDRGRGSMATVLVQRGTLRVGDSIVCGDAYGRVRAMLDENGNRVKEAEPSRPVQVLGLTNVPSAGDSFLVVKDDRVARQIAQQREARERFAQQAKASRRVTLDNWQKTLEEGQREELLLIIKGDMSGSVEALEESLLKIDPGTDEVAIRVIGRGVGAITQNDINLAASSGAVIIGFNVRPEGKNSELAERMGVDIRYYSVIYQAIEEVEAALKGMLKPEYEEVQLGTAEIREIFKVPRVGNVAGAVVRSGVIKRNAKARLIRDGVVVSDNLTVESLRRFKDDVTEVREGFECGIGIGYNDIRVEDIIETFEMREKPRD</sequence>
<proteinExistence type="inferred from homology"/>
<organism>
    <name type="scientific">Thermobifida fusca (strain YX)</name>
    <dbReference type="NCBI Taxonomy" id="269800"/>
    <lineage>
        <taxon>Bacteria</taxon>
        <taxon>Bacillati</taxon>
        <taxon>Actinomycetota</taxon>
        <taxon>Actinomycetes</taxon>
        <taxon>Streptosporangiales</taxon>
        <taxon>Nocardiopsidaceae</taxon>
        <taxon>Thermobifida</taxon>
    </lineage>
</organism>
<comment type="function">
    <text evidence="2">One of the essential components for the initiation of protein synthesis. Protects formylmethionyl-tRNA from spontaneous hydrolysis and promotes its binding to the 30S ribosomal subunits. Also involved in the hydrolysis of GTP during the formation of the 70S ribosomal complex.</text>
</comment>
<comment type="subcellular location">
    <subcellularLocation>
        <location evidence="2">Cytoplasm</location>
    </subcellularLocation>
</comment>
<comment type="similarity">
    <text evidence="2">Belongs to the TRAFAC class translation factor GTPase superfamily. Classic translation factor GTPase family. IF-2 subfamily.</text>
</comment>
<protein>
    <recommendedName>
        <fullName evidence="2">Translation initiation factor IF-2</fullName>
    </recommendedName>
</protein>
<name>IF2_THEFY</name>
<accession>Q47RV1</accession>
<reference key="1">
    <citation type="journal article" date="2007" name="J. Bacteriol.">
        <title>Genome sequence and analysis of the soil cellulolytic actinomycete Thermobifida fusca YX.</title>
        <authorList>
            <person name="Lykidis A."/>
            <person name="Mavromatis K."/>
            <person name="Ivanova N."/>
            <person name="Anderson I."/>
            <person name="Land M."/>
            <person name="DiBartolo G."/>
            <person name="Martinez M."/>
            <person name="Lapidus A."/>
            <person name="Lucas S."/>
            <person name="Copeland A."/>
            <person name="Richardson P."/>
            <person name="Wilson D.B."/>
            <person name="Kyrpides N."/>
        </authorList>
    </citation>
    <scope>NUCLEOTIDE SEQUENCE [LARGE SCALE GENOMIC DNA]</scope>
    <source>
        <strain>YX</strain>
    </source>
</reference>
<keyword id="KW-0963">Cytoplasm</keyword>
<keyword id="KW-0342">GTP-binding</keyword>
<keyword id="KW-0396">Initiation factor</keyword>
<keyword id="KW-0547">Nucleotide-binding</keyword>
<keyword id="KW-0648">Protein biosynthesis</keyword>
<evidence type="ECO:0000250" key="1"/>
<evidence type="ECO:0000255" key="2">
    <source>
        <dbReference type="HAMAP-Rule" id="MF_00100"/>
    </source>
</evidence>
<evidence type="ECO:0000256" key="3">
    <source>
        <dbReference type="SAM" id="MobiDB-lite"/>
    </source>
</evidence>